<proteinExistence type="inferred from homology"/>
<feature type="chain" id="PRO_0000178675" description="Probable chromosome-partitioning protein ParB">
    <location>
        <begin position="1"/>
        <end position="278"/>
    </location>
</feature>
<name>PARB_CAMJE</name>
<evidence type="ECO:0000250" key="1"/>
<evidence type="ECO:0000305" key="2"/>
<reference key="1">
    <citation type="journal article" date="2000" name="Nature">
        <title>The genome sequence of the food-borne pathogen Campylobacter jejuni reveals hypervariable sequences.</title>
        <authorList>
            <person name="Parkhill J."/>
            <person name="Wren B.W."/>
            <person name="Mungall K.L."/>
            <person name="Ketley J.M."/>
            <person name="Churcher C.M."/>
            <person name="Basham D."/>
            <person name="Chillingworth T."/>
            <person name="Davies R.M."/>
            <person name="Feltwell T."/>
            <person name="Holroyd S."/>
            <person name="Jagels K."/>
            <person name="Karlyshev A.V."/>
            <person name="Moule S."/>
            <person name="Pallen M.J."/>
            <person name="Penn C.W."/>
            <person name="Quail M.A."/>
            <person name="Rajandream M.A."/>
            <person name="Rutherford K.M."/>
            <person name="van Vliet A.H.M."/>
            <person name="Whitehead S."/>
            <person name="Barrell B.G."/>
        </authorList>
    </citation>
    <scope>NUCLEOTIDE SEQUENCE [LARGE SCALE GENOMIC DNA]</scope>
    <source>
        <strain>ATCC 700819 / NCTC 11168</strain>
    </source>
</reference>
<comment type="function">
    <text evidence="1">Involved in chromosome partition. Localize to both poles of the predivisional cell following completion of DNA replication. Binds to the DNA origin of replication (By similarity).</text>
</comment>
<comment type="similarity">
    <text evidence="2">Belongs to the ParB family.</text>
</comment>
<protein>
    <recommendedName>
        <fullName>Probable chromosome-partitioning protein ParB</fullName>
    </recommendedName>
</protein>
<dbReference type="EMBL" id="AL111168">
    <property type="protein sequence ID" value="CAL34272.1"/>
    <property type="molecule type" value="Genomic_DNA"/>
</dbReference>
<dbReference type="PIR" id="E81426">
    <property type="entry name" value="E81426"/>
</dbReference>
<dbReference type="RefSeq" id="WP_002851919.1">
    <property type="nucleotide sequence ID" value="NZ_SZUC01000005.1"/>
</dbReference>
<dbReference type="RefSeq" id="YP_002343561.1">
    <property type="nucleotide sequence ID" value="NC_002163.1"/>
</dbReference>
<dbReference type="SMR" id="Q9PJ25"/>
<dbReference type="IntAct" id="Q9PJ25">
    <property type="interactions" value="3"/>
</dbReference>
<dbReference type="STRING" id="192222.Cj0101"/>
<dbReference type="PaxDb" id="192222-Cj0101"/>
<dbReference type="EnsemblBacteria" id="CAL34272">
    <property type="protein sequence ID" value="CAL34272"/>
    <property type="gene ID" value="Cj0101"/>
</dbReference>
<dbReference type="GeneID" id="904366"/>
<dbReference type="KEGG" id="cje:Cj0101"/>
<dbReference type="PATRIC" id="fig|192222.6.peg.99"/>
<dbReference type="eggNOG" id="COG1475">
    <property type="taxonomic scope" value="Bacteria"/>
</dbReference>
<dbReference type="HOGENOM" id="CLU_023853_0_1_7"/>
<dbReference type="OrthoDB" id="9802051at2"/>
<dbReference type="Proteomes" id="UP000000799">
    <property type="component" value="Chromosome"/>
</dbReference>
<dbReference type="GO" id="GO:0005694">
    <property type="term" value="C:chromosome"/>
    <property type="evidence" value="ECO:0007669"/>
    <property type="project" value="TreeGrafter"/>
</dbReference>
<dbReference type="GO" id="GO:0003677">
    <property type="term" value="F:DNA binding"/>
    <property type="evidence" value="ECO:0007669"/>
    <property type="project" value="UniProtKB-KW"/>
</dbReference>
<dbReference type="GO" id="GO:0007059">
    <property type="term" value="P:chromosome segregation"/>
    <property type="evidence" value="ECO:0007669"/>
    <property type="project" value="UniProtKB-KW"/>
</dbReference>
<dbReference type="GO" id="GO:0045881">
    <property type="term" value="P:positive regulation of sporulation resulting in formation of a cellular spore"/>
    <property type="evidence" value="ECO:0007669"/>
    <property type="project" value="TreeGrafter"/>
</dbReference>
<dbReference type="CDD" id="cd16393">
    <property type="entry name" value="SPO0J_N"/>
    <property type="match status" value="1"/>
</dbReference>
<dbReference type="FunFam" id="1.10.10.2830:FF:000001">
    <property type="entry name" value="Chromosome partitioning protein ParB"/>
    <property type="match status" value="1"/>
</dbReference>
<dbReference type="FunFam" id="3.90.1530.30:FF:000001">
    <property type="entry name" value="Chromosome partitioning protein ParB"/>
    <property type="match status" value="1"/>
</dbReference>
<dbReference type="Gene3D" id="1.10.10.2830">
    <property type="match status" value="1"/>
</dbReference>
<dbReference type="Gene3D" id="3.90.1530.30">
    <property type="match status" value="1"/>
</dbReference>
<dbReference type="InterPro" id="IPR050336">
    <property type="entry name" value="Chromosome_partition/occlusion"/>
</dbReference>
<dbReference type="InterPro" id="IPR041468">
    <property type="entry name" value="HTH_ParB/Spo0J"/>
</dbReference>
<dbReference type="InterPro" id="IPR004437">
    <property type="entry name" value="ParB/RepB/Spo0J"/>
</dbReference>
<dbReference type="InterPro" id="IPR003115">
    <property type="entry name" value="ParB/Sulfiredoxin_dom"/>
</dbReference>
<dbReference type="InterPro" id="IPR036086">
    <property type="entry name" value="ParB/Sulfiredoxin_sf"/>
</dbReference>
<dbReference type="NCBIfam" id="TIGR00180">
    <property type="entry name" value="parB_part"/>
    <property type="match status" value="1"/>
</dbReference>
<dbReference type="PANTHER" id="PTHR33375">
    <property type="entry name" value="CHROMOSOME-PARTITIONING PROTEIN PARB-RELATED"/>
    <property type="match status" value="1"/>
</dbReference>
<dbReference type="PANTHER" id="PTHR33375:SF1">
    <property type="entry name" value="CHROMOSOME-PARTITIONING PROTEIN PARB-RELATED"/>
    <property type="match status" value="1"/>
</dbReference>
<dbReference type="Pfam" id="PF17762">
    <property type="entry name" value="HTH_ParB"/>
    <property type="match status" value="1"/>
</dbReference>
<dbReference type="Pfam" id="PF02195">
    <property type="entry name" value="ParBc"/>
    <property type="match status" value="1"/>
</dbReference>
<dbReference type="SMART" id="SM00470">
    <property type="entry name" value="ParB"/>
    <property type="match status" value="1"/>
</dbReference>
<dbReference type="SUPFAM" id="SSF110849">
    <property type="entry name" value="ParB/Sulfiredoxin"/>
    <property type="match status" value="1"/>
</dbReference>
<keyword id="KW-0159">Chromosome partition</keyword>
<keyword id="KW-0238">DNA-binding</keyword>
<keyword id="KW-1185">Reference proteome</keyword>
<organism>
    <name type="scientific">Campylobacter jejuni subsp. jejuni serotype O:2 (strain ATCC 700819 / NCTC 11168)</name>
    <dbReference type="NCBI Taxonomy" id="192222"/>
    <lineage>
        <taxon>Bacteria</taxon>
        <taxon>Pseudomonadati</taxon>
        <taxon>Campylobacterota</taxon>
        <taxon>Epsilonproteobacteria</taxon>
        <taxon>Campylobacterales</taxon>
        <taxon>Campylobacteraceae</taxon>
        <taxon>Campylobacter</taxon>
    </lineage>
</organism>
<sequence length="278" mass="32028">MGLNKDRGLSSLISDMDTVYSKELGFDKNQSTMIEIDQISPNPFQPRKNFDQEALDELANSIKEFGLIQPIIVFKKNNKFILIAGERRLRAVKALGKKEILAFIADIDENKLRELALIENIQRENLNPIELANSYKDLMQVHKITQENLAELIHKSRTQITNTLRLLNLDIRTQELIASGKISQGHAKVLVGLDQKDEKMLVDSIIGQKLNVRDTEKIVKKIKNNESLPNQEFEDEIKKLKQILNRFGFDCKNKNNDFVIHLENIDKIKKLIKMLEKL</sequence>
<accession>Q9PJ25</accession>
<accession>Q0PC36</accession>
<gene>
    <name type="primary">parB</name>
    <name type="ordered locus">Cj0101</name>
</gene>